<proteinExistence type="inferred from homology"/>
<reference key="1">
    <citation type="journal article" date="2009" name="Genome Res.">
        <title>Genome structure of a Saccharomyces cerevisiae strain widely used in bioethanol production.</title>
        <authorList>
            <person name="Argueso J.L."/>
            <person name="Carazzolle M.F."/>
            <person name="Mieczkowski P.A."/>
            <person name="Duarte F.M."/>
            <person name="Netto O.V.C."/>
            <person name="Missawa S.K."/>
            <person name="Galzerani F."/>
            <person name="Costa G.G.L."/>
            <person name="Vidal R.O."/>
            <person name="Noronha M.F."/>
            <person name="Dominska M."/>
            <person name="Andrietta M.G.S."/>
            <person name="Andrietta S.R."/>
            <person name="Cunha A.F."/>
            <person name="Gomes L.H."/>
            <person name="Tavares F.C.A."/>
            <person name="Alcarde A.R."/>
            <person name="Dietrich F.S."/>
            <person name="McCusker J.H."/>
            <person name="Petes T.D."/>
            <person name="Pereira G.A.G."/>
        </authorList>
    </citation>
    <scope>NUCLEOTIDE SEQUENCE [LARGE SCALE GENOMIC DNA]</scope>
    <source>
        <strain>JAY291</strain>
    </source>
</reference>
<sequence length="1090" mass="125966">MSVYHLPTLLNPLVNAIFNCPEPERSPLKKLFANLKTRRFILLAPPSEYLLNYHDVKSKLPLHDLCYNAEFINSYILLMTENSYINTNSRDSHYETLDGKTVVIQWKNNVIHALNGFHIRRRLKILETKILPNFNDYFEGAADFIILFIDQPLNCEFVPNDYLQCFHNYEKIPKNAHAMPNLSIDSFQQERSSFENILHIHPARLTQLGQLFSSYRTLAPGDDPSRSIFESIVQQAFDGMKSDSLFKNFSNLYDLIHDYFELNLYDDIWSRLTTHFKGHEVDTEKYKYFSVNQLLTDFYSKDYGEFKLHDITLIERRLHLASKHLQKLALTHSYAEKSKILVETLQKLSGTTEMDSHQLELPDGLNNMTMDADTLISLFVLVVCRSEQKHLKSHLYYLQNFSNNSSSTKFGILGYAVSTLEAVVCYFEDFNKNTGNVAKANTLCEKTKNLLDKLSCENPTNEVEDLATYKDILTYRNEQGQSIPSICITNHKNYILLDILSEYENDFPVEDLLEDETIDGSTLLIESIKAGNLEAAKVLIKIMLFNCTEEELVSYINKTDKYARTVAHYLTHEMDILKSIGNYIDWKRKNSSGQTPLFSIFRSYDQPNYEEMVKTAFDIANTWYRKHNSLFDYLDHTDNKGNSLLHVLKTNIPILLQLTKLDINEENYKGLTPLMVYVKYKRLSNIDAITKDRRLILEKVQNSTFFTCFDYAKDHSVLSKIGERGVKDSLFGLIYFHSLRYHNLNATTNITSVSNAEKPFATTVINMKTIQGLLRSILKDNPFTFLPLNTYIDEISHLNRSDLTIIGKTDVTSLLHQLTNCFNVLLFLKKIPENLFTDEASILYWMRINTSKRNQKPSGKENPKTMEPEEINMIQSFLRFNFDEISSFKASLNILRKVLIFINLKSDDFEDAYKGLNEMGRKLINSEASSAFKGIITNHNMFSELSLAELLENVRFLEQCTIQLSSFVQIILFEKIPNWWKHYGEFLALHKSYRKAFPNMVKPKSASDTSSRAPLGGFIETKREQSEQRLAVQIKASSKMLKELGSEIFVAHERLAEELSNYMEFRKACLDQRSLVAFATTNISVLQECV</sequence>
<name>U507_YEAS2</name>
<feature type="chain" id="PRO_0000393365" description="UPF0507 protein C1Q_01007">
    <location>
        <begin position="1"/>
        <end position="1090"/>
    </location>
</feature>
<feature type="domain" description="VPS9" evidence="1">
    <location>
        <begin position="289"/>
        <end position="436"/>
    </location>
</feature>
<organism>
    <name type="scientific">Saccharomyces cerevisiae (strain JAY291)</name>
    <name type="common">Baker's yeast</name>
    <dbReference type="NCBI Taxonomy" id="574961"/>
    <lineage>
        <taxon>Eukaryota</taxon>
        <taxon>Fungi</taxon>
        <taxon>Dikarya</taxon>
        <taxon>Ascomycota</taxon>
        <taxon>Saccharomycotina</taxon>
        <taxon>Saccharomycetes</taxon>
        <taxon>Saccharomycetales</taxon>
        <taxon>Saccharomycetaceae</taxon>
        <taxon>Saccharomyces</taxon>
    </lineage>
</organism>
<accession>C7GLC0</accession>
<comment type="similarity">
    <text evidence="2">Belongs to the UPF0507 family.</text>
</comment>
<comment type="sequence caution" evidence="2">
    <conflict type="erroneous initiation">
        <sequence resource="EMBL-CDS" id="EEU08458"/>
    </conflict>
</comment>
<gene>
    <name type="ORF">C1Q_01007</name>
</gene>
<evidence type="ECO:0000255" key="1">
    <source>
        <dbReference type="PROSITE-ProRule" id="PRU00550"/>
    </source>
</evidence>
<evidence type="ECO:0000305" key="2"/>
<protein>
    <recommendedName>
        <fullName>UPF0507 protein C1Q_01007</fullName>
    </recommendedName>
</protein>
<dbReference type="EMBL" id="ACFL01000033">
    <property type="protein sequence ID" value="EEU08458.1"/>
    <property type="status" value="ALT_INIT"/>
    <property type="molecule type" value="Genomic_DNA"/>
</dbReference>
<dbReference type="SMR" id="C7GLC0"/>
<dbReference type="OrthoDB" id="35970at4893"/>
<dbReference type="Proteomes" id="UP000008073">
    <property type="component" value="Unassembled WGS sequence"/>
</dbReference>
<dbReference type="GO" id="GO:0005769">
    <property type="term" value="C:early endosome"/>
    <property type="evidence" value="ECO:0007669"/>
    <property type="project" value="TreeGrafter"/>
</dbReference>
<dbReference type="GO" id="GO:0005770">
    <property type="term" value="C:late endosome"/>
    <property type="evidence" value="ECO:0007669"/>
    <property type="project" value="TreeGrafter"/>
</dbReference>
<dbReference type="GO" id="GO:0005886">
    <property type="term" value="C:plasma membrane"/>
    <property type="evidence" value="ECO:0007669"/>
    <property type="project" value="TreeGrafter"/>
</dbReference>
<dbReference type="GO" id="GO:0030133">
    <property type="term" value="C:transport vesicle"/>
    <property type="evidence" value="ECO:0007669"/>
    <property type="project" value="TreeGrafter"/>
</dbReference>
<dbReference type="GO" id="GO:0097422">
    <property type="term" value="C:tubular endosome"/>
    <property type="evidence" value="ECO:0007669"/>
    <property type="project" value="TreeGrafter"/>
</dbReference>
<dbReference type="GO" id="GO:0005085">
    <property type="term" value="F:guanyl-nucleotide exchange factor activity"/>
    <property type="evidence" value="ECO:0007669"/>
    <property type="project" value="TreeGrafter"/>
</dbReference>
<dbReference type="GO" id="GO:0000149">
    <property type="term" value="F:SNARE binding"/>
    <property type="evidence" value="ECO:0007669"/>
    <property type="project" value="TreeGrafter"/>
</dbReference>
<dbReference type="GO" id="GO:0045022">
    <property type="term" value="P:early endosome to late endosome transport"/>
    <property type="evidence" value="ECO:0007669"/>
    <property type="project" value="TreeGrafter"/>
</dbReference>
<dbReference type="Gene3D" id="1.25.40.20">
    <property type="entry name" value="Ankyrin repeat-containing domain"/>
    <property type="match status" value="1"/>
</dbReference>
<dbReference type="Gene3D" id="1.20.1050.80">
    <property type="entry name" value="VPS9 domain"/>
    <property type="match status" value="1"/>
</dbReference>
<dbReference type="InterPro" id="IPR036770">
    <property type="entry name" value="Ankyrin_rpt-contain_sf"/>
</dbReference>
<dbReference type="InterPro" id="IPR051248">
    <property type="entry name" value="UPF0507/Ank_repeat_27"/>
</dbReference>
<dbReference type="InterPro" id="IPR003123">
    <property type="entry name" value="VPS9"/>
</dbReference>
<dbReference type="InterPro" id="IPR037191">
    <property type="entry name" value="VPS9_dom_sf"/>
</dbReference>
<dbReference type="PANTHER" id="PTHR24170">
    <property type="entry name" value="ANKYRIN REPEAT DOMAIN-CONTAINING PROTEIN 27"/>
    <property type="match status" value="1"/>
</dbReference>
<dbReference type="PANTHER" id="PTHR24170:SF1">
    <property type="entry name" value="DOMAIN PROTEIN, PUTATIVE (AFU_ORTHOLOGUE AFUA_1G09870)-RELATED"/>
    <property type="match status" value="1"/>
</dbReference>
<dbReference type="Pfam" id="PF02204">
    <property type="entry name" value="VPS9"/>
    <property type="match status" value="1"/>
</dbReference>
<dbReference type="SUPFAM" id="SSF140860">
    <property type="entry name" value="Pseudo ankyrin repeat-like"/>
    <property type="match status" value="1"/>
</dbReference>
<dbReference type="SUPFAM" id="SSF109993">
    <property type="entry name" value="VPS9 domain"/>
    <property type="match status" value="1"/>
</dbReference>
<dbReference type="PROSITE" id="PS51205">
    <property type="entry name" value="VPS9"/>
    <property type="match status" value="1"/>
</dbReference>